<reference key="1">
    <citation type="journal article" date="2005" name="Nature">
        <title>The map-based sequence of the rice genome.</title>
        <authorList>
            <consortium name="International rice genome sequencing project (IRGSP)"/>
        </authorList>
    </citation>
    <scope>NUCLEOTIDE SEQUENCE [LARGE SCALE GENOMIC DNA]</scope>
    <source>
        <strain>cv. Nipponbare</strain>
    </source>
</reference>
<reference key="2">
    <citation type="journal article" date="2008" name="Nucleic Acids Res.">
        <title>The rice annotation project database (RAP-DB): 2008 update.</title>
        <authorList>
            <consortium name="The rice annotation project (RAP)"/>
        </authorList>
    </citation>
    <scope>GENOME REANNOTATION</scope>
    <source>
        <strain>cv. Nipponbare</strain>
    </source>
</reference>
<reference key="3">
    <citation type="journal article" date="2013" name="Rice">
        <title>Improvement of the Oryza sativa Nipponbare reference genome using next generation sequence and optical map data.</title>
        <authorList>
            <person name="Kawahara Y."/>
            <person name="de la Bastide M."/>
            <person name="Hamilton J.P."/>
            <person name="Kanamori H."/>
            <person name="McCombie W.R."/>
            <person name="Ouyang S."/>
            <person name="Schwartz D.C."/>
            <person name="Tanaka T."/>
            <person name="Wu J."/>
            <person name="Zhou S."/>
            <person name="Childs K.L."/>
            <person name="Davidson R.M."/>
            <person name="Lin H."/>
            <person name="Quesada-Ocampo L."/>
            <person name="Vaillancourt B."/>
            <person name="Sakai H."/>
            <person name="Lee S.S."/>
            <person name="Kim J."/>
            <person name="Numa H."/>
            <person name="Itoh T."/>
            <person name="Buell C.R."/>
            <person name="Matsumoto T."/>
        </authorList>
    </citation>
    <scope>GENOME REANNOTATION</scope>
    <source>
        <strain>cv. Nipponbare</strain>
    </source>
</reference>
<reference key="4">
    <citation type="journal article" date="2005" name="PLoS Biol.">
        <title>The genomes of Oryza sativa: a history of duplications.</title>
        <authorList>
            <person name="Yu J."/>
            <person name="Wang J."/>
            <person name="Lin W."/>
            <person name="Li S."/>
            <person name="Li H."/>
            <person name="Zhou J."/>
            <person name="Ni P."/>
            <person name="Dong W."/>
            <person name="Hu S."/>
            <person name="Zeng C."/>
            <person name="Zhang J."/>
            <person name="Zhang Y."/>
            <person name="Li R."/>
            <person name="Xu Z."/>
            <person name="Li S."/>
            <person name="Li X."/>
            <person name="Zheng H."/>
            <person name="Cong L."/>
            <person name="Lin L."/>
            <person name="Yin J."/>
            <person name="Geng J."/>
            <person name="Li G."/>
            <person name="Shi J."/>
            <person name="Liu J."/>
            <person name="Lv H."/>
            <person name="Li J."/>
            <person name="Wang J."/>
            <person name="Deng Y."/>
            <person name="Ran L."/>
            <person name="Shi X."/>
            <person name="Wang X."/>
            <person name="Wu Q."/>
            <person name="Li C."/>
            <person name="Ren X."/>
            <person name="Wang J."/>
            <person name="Wang X."/>
            <person name="Li D."/>
            <person name="Liu D."/>
            <person name="Zhang X."/>
            <person name="Ji Z."/>
            <person name="Zhao W."/>
            <person name="Sun Y."/>
            <person name="Zhang Z."/>
            <person name="Bao J."/>
            <person name="Han Y."/>
            <person name="Dong L."/>
            <person name="Ji J."/>
            <person name="Chen P."/>
            <person name="Wu S."/>
            <person name="Liu J."/>
            <person name="Xiao Y."/>
            <person name="Bu D."/>
            <person name="Tan J."/>
            <person name="Yang L."/>
            <person name="Ye C."/>
            <person name="Zhang J."/>
            <person name="Xu J."/>
            <person name="Zhou Y."/>
            <person name="Yu Y."/>
            <person name="Zhang B."/>
            <person name="Zhuang S."/>
            <person name="Wei H."/>
            <person name="Liu B."/>
            <person name="Lei M."/>
            <person name="Yu H."/>
            <person name="Li Y."/>
            <person name="Xu H."/>
            <person name="Wei S."/>
            <person name="He X."/>
            <person name="Fang L."/>
            <person name="Zhang Z."/>
            <person name="Zhang Y."/>
            <person name="Huang X."/>
            <person name="Su Z."/>
            <person name="Tong W."/>
            <person name="Li J."/>
            <person name="Tong Z."/>
            <person name="Li S."/>
            <person name="Ye J."/>
            <person name="Wang L."/>
            <person name="Fang L."/>
            <person name="Lei T."/>
            <person name="Chen C.-S."/>
            <person name="Chen H.-C."/>
            <person name="Xu Z."/>
            <person name="Li H."/>
            <person name="Huang H."/>
            <person name="Zhang F."/>
            <person name="Xu H."/>
            <person name="Li N."/>
            <person name="Zhao C."/>
            <person name="Li S."/>
            <person name="Dong L."/>
            <person name="Huang Y."/>
            <person name="Li L."/>
            <person name="Xi Y."/>
            <person name="Qi Q."/>
            <person name="Li W."/>
            <person name="Zhang B."/>
            <person name="Hu W."/>
            <person name="Zhang Y."/>
            <person name="Tian X."/>
            <person name="Jiao Y."/>
            <person name="Liang X."/>
            <person name="Jin J."/>
            <person name="Gao L."/>
            <person name="Zheng W."/>
            <person name="Hao B."/>
            <person name="Liu S.-M."/>
            <person name="Wang W."/>
            <person name="Yuan L."/>
            <person name="Cao M."/>
            <person name="McDermott J."/>
            <person name="Samudrala R."/>
            <person name="Wang J."/>
            <person name="Wong G.K.-S."/>
            <person name="Yang H."/>
        </authorList>
    </citation>
    <scope>NUCLEOTIDE SEQUENCE [LARGE SCALE GENOMIC DNA]</scope>
    <source>
        <strain>cv. Nipponbare</strain>
    </source>
</reference>
<dbReference type="EC" id="3.6.5.-"/>
<dbReference type="EMBL" id="AP003487">
    <property type="protein sequence ID" value="BAD68406.1"/>
    <property type="molecule type" value="Genomic_DNA"/>
</dbReference>
<dbReference type="EMBL" id="AP008212">
    <property type="protein sequence ID" value="BAF18697.1"/>
    <property type="molecule type" value="Genomic_DNA"/>
</dbReference>
<dbReference type="EMBL" id="AP014962">
    <property type="protein sequence ID" value="BAS96126.1"/>
    <property type="molecule type" value="Genomic_DNA"/>
</dbReference>
<dbReference type="EMBL" id="CM000143">
    <property type="protein sequence ID" value="EEE65074.1"/>
    <property type="molecule type" value="Genomic_DNA"/>
</dbReference>
<dbReference type="RefSeq" id="XP_015644281.1">
    <property type="nucleotide sequence ID" value="XM_015788795.1"/>
</dbReference>
<dbReference type="SMR" id="Q5VQ69"/>
<dbReference type="FunCoup" id="Q5VQ69">
    <property type="interactions" value="2056"/>
</dbReference>
<dbReference type="STRING" id="39947.Q5VQ69"/>
<dbReference type="iPTMnet" id="Q5VQ69"/>
<dbReference type="PaxDb" id="39947-Q5VQ69"/>
<dbReference type="EnsemblPlants" id="Os06t0144800-01">
    <property type="protein sequence ID" value="Os06t0144800-01"/>
    <property type="gene ID" value="Os06g0144800"/>
</dbReference>
<dbReference type="Gramene" id="Os06t0144800-01">
    <property type="protein sequence ID" value="Os06t0144800-01"/>
    <property type="gene ID" value="Os06g0144800"/>
</dbReference>
<dbReference type="KEGG" id="dosa:Os06g0144800"/>
<dbReference type="eggNOG" id="KOG0462">
    <property type="taxonomic scope" value="Eukaryota"/>
</dbReference>
<dbReference type="HOGENOM" id="CLU_009995_3_3_1"/>
<dbReference type="InParanoid" id="Q5VQ69"/>
<dbReference type="OMA" id="HADVFHQ"/>
<dbReference type="OrthoDB" id="1074at2759"/>
<dbReference type="Proteomes" id="UP000000763">
    <property type="component" value="Chromosome 6"/>
</dbReference>
<dbReference type="Proteomes" id="UP000007752">
    <property type="component" value="Chromosome 6"/>
</dbReference>
<dbReference type="Proteomes" id="UP000059680">
    <property type="component" value="Chromosome 6"/>
</dbReference>
<dbReference type="GO" id="GO:0005743">
    <property type="term" value="C:mitochondrial inner membrane"/>
    <property type="evidence" value="ECO:0007669"/>
    <property type="project" value="UniProtKB-SubCell"/>
</dbReference>
<dbReference type="GO" id="GO:0005759">
    <property type="term" value="C:mitochondrial matrix"/>
    <property type="evidence" value="ECO:0007669"/>
    <property type="project" value="UniProtKB-UniRule"/>
</dbReference>
<dbReference type="GO" id="GO:0005739">
    <property type="term" value="C:mitochondrion"/>
    <property type="evidence" value="ECO:0000318"/>
    <property type="project" value="GO_Central"/>
</dbReference>
<dbReference type="GO" id="GO:0005525">
    <property type="term" value="F:GTP binding"/>
    <property type="evidence" value="ECO:0007669"/>
    <property type="project" value="UniProtKB-UniRule"/>
</dbReference>
<dbReference type="GO" id="GO:0003924">
    <property type="term" value="F:GTPase activity"/>
    <property type="evidence" value="ECO:0007669"/>
    <property type="project" value="UniProtKB-UniRule"/>
</dbReference>
<dbReference type="GO" id="GO:0097177">
    <property type="term" value="F:mitochondrial ribosome binding"/>
    <property type="evidence" value="ECO:0000318"/>
    <property type="project" value="GO_Central"/>
</dbReference>
<dbReference type="GO" id="GO:0045727">
    <property type="term" value="P:positive regulation of translation"/>
    <property type="evidence" value="ECO:0000318"/>
    <property type="project" value="GO_Central"/>
</dbReference>
<dbReference type="GO" id="GO:0006412">
    <property type="term" value="P:translation"/>
    <property type="evidence" value="ECO:0007669"/>
    <property type="project" value="UniProtKB-KW"/>
</dbReference>
<dbReference type="CDD" id="cd03699">
    <property type="entry name" value="EF4_II"/>
    <property type="match status" value="1"/>
</dbReference>
<dbReference type="CDD" id="cd16260">
    <property type="entry name" value="EF4_III"/>
    <property type="match status" value="1"/>
</dbReference>
<dbReference type="CDD" id="cd01890">
    <property type="entry name" value="LepA"/>
    <property type="match status" value="1"/>
</dbReference>
<dbReference type="CDD" id="cd03709">
    <property type="entry name" value="lepA_C"/>
    <property type="match status" value="1"/>
</dbReference>
<dbReference type="FunFam" id="3.40.50.300:FF:000078">
    <property type="entry name" value="Elongation factor 4"/>
    <property type="match status" value="1"/>
</dbReference>
<dbReference type="FunFam" id="2.40.30.10:FF:000015">
    <property type="entry name" value="Translation factor GUF1, mitochondrial"/>
    <property type="match status" value="1"/>
</dbReference>
<dbReference type="FunFam" id="3.30.70.240:FF:000007">
    <property type="entry name" value="Translation factor GUF1, mitochondrial"/>
    <property type="match status" value="1"/>
</dbReference>
<dbReference type="FunFam" id="3.30.70.2570:FF:000001">
    <property type="entry name" value="Translation factor GUF1, mitochondrial"/>
    <property type="match status" value="1"/>
</dbReference>
<dbReference type="FunFam" id="3.30.70.870:FF:000004">
    <property type="entry name" value="Translation factor GUF1, mitochondrial"/>
    <property type="match status" value="1"/>
</dbReference>
<dbReference type="Gene3D" id="3.30.70.240">
    <property type="match status" value="1"/>
</dbReference>
<dbReference type="Gene3D" id="3.30.70.2570">
    <property type="entry name" value="Elongation factor 4, C-terminal domain"/>
    <property type="match status" value="1"/>
</dbReference>
<dbReference type="Gene3D" id="3.30.70.870">
    <property type="entry name" value="Elongation Factor G (Translational Gtpase), domain 3"/>
    <property type="match status" value="1"/>
</dbReference>
<dbReference type="Gene3D" id="3.40.50.300">
    <property type="entry name" value="P-loop containing nucleotide triphosphate hydrolases"/>
    <property type="match status" value="1"/>
</dbReference>
<dbReference type="Gene3D" id="2.40.30.10">
    <property type="entry name" value="Translation factors"/>
    <property type="match status" value="1"/>
</dbReference>
<dbReference type="HAMAP" id="MF_00071">
    <property type="entry name" value="LepA"/>
    <property type="match status" value="1"/>
</dbReference>
<dbReference type="InterPro" id="IPR006297">
    <property type="entry name" value="EF-4"/>
</dbReference>
<dbReference type="InterPro" id="IPR035647">
    <property type="entry name" value="EFG_III/V"/>
</dbReference>
<dbReference type="InterPro" id="IPR000640">
    <property type="entry name" value="EFG_V-like"/>
</dbReference>
<dbReference type="InterPro" id="IPR004161">
    <property type="entry name" value="EFTu-like_2"/>
</dbReference>
<dbReference type="InterPro" id="IPR031157">
    <property type="entry name" value="G_TR_CS"/>
</dbReference>
<dbReference type="InterPro" id="IPR038363">
    <property type="entry name" value="LepA_C_sf"/>
</dbReference>
<dbReference type="InterPro" id="IPR013842">
    <property type="entry name" value="LepA_CTD"/>
</dbReference>
<dbReference type="InterPro" id="IPR035654">
    <property type="entry name" value="LepA_IV"/>
</dbReference>
<dbReference type="InterPro" id="IPR027417">
    <property type="entry name" value="P-loop_NTPase"/>
</dbReference>
<dbReference type="InterPro" id="IPR005225">
    <property type="entry name" value="Small_GTP-bd"/>
</dbReference>
<dbReference type="InterPro" id="IPR000795">
    <property type="entry name" value="T_Tr_GTP-bd_dom"/>
</dbReference>
<dbReference type="InterPro" id="IPR009000">
    <property type="entry name" value="Transl_B-barrel_sf"/>
</dbReference>
<dbReference type="NCBIfam" id="TIGR01393">
    <property type="entry name" value="lepA"/>
    <property type="match status" value="1"/>
</dbReference>
<dbReference type="NCBIfam" id="TIGR00231">
    <property type="entry name" value="small_GTP"/>
    <property type="match status" value="1"/>
</dbReference>
<dbReference type="PANTHER" id="PTHR43512:SF7">
    <property type="entry name" value="TRANSLATION FACTOR GUF1, MITOCHONDRIAL"/>
    <property type="match status" value="1"/>
</dbReference>
<dbReference type="PANTHER" id="PTHR43512">
    <property type="entry name" value="TRANSLATION FACTOR GUF1-RELATED"/>
    <property type="match status" value="1"/>
</dbReference>
<dbReference type="Pfam" id="PF00679">
    <property type="entry name" value="EFG_C"/>
    <property type="match status" value="1"/>
</dbReference>
<dbReference type="Pfam" id="PF00009">
    <property type="entry name" value="GTP_EFTU"/>
    <property type="match status" value="1"/>
</dbReference>
<dbReference type="Pfam" id="PF03144">
    <property type="entry name" value="GTP_EFTU_D2"/>
    <property type="match status" value="1"/>
</dbReference>
<dbReference type="Pfam" id="PF06421">
    <property type="entry name" value="LepA_C"/>
    <property type="match status" value="1"/>
</dbReference>
<dbReference type="PRINTS" id="PR00315">
    <property type="entry name" value="ELONGATNFCT"/>
</dbReference>
<dbReference type="SUPFAM" id="SSF54980">
    <property type="entry name" value="EF-G C-terminal domain-like"/>
    <property type="match status" value="2"/>
</dbReference>
<dbReference type="SUPFAM" id="SSF52540">
    <property type="entry name" value="P-loop containing nucleoside triphosphate hydrolases"/>
    <property type="match status" value="1"/>
</dbReference>
<dbReference type="SUPFAM" id="SSF50447">
    <property type="entry name" value="Translation proteins"/>
    <property type="match status" value="1"/>
</dbReference>
<dbReference type="PROSITE" id="PS00301">
    <property type="entry name" value="G_TR_1"/>
    <property type="match status" value="1"/>
</dbReference>
<dbReference type="PROSITE" id="PS51722">
    <property type="entry name" value="G_TR_2"/>
    <property type="match status" value="1"/>
</dbReference>
<proteinExistence type="inferred from homology"/>
<organism>
    <name type="scientific">Oryza sativa subsp. japonica</name>
    <name type="common">Rice</name>
    <dbReference type="NCBI Taxonomy" id="39947"/>
    <lineage>
        <taxon>Eukaryota</taxon>
        <taxon>Viridiplantae</taxon>
        <taxon>Streptophyta</taxon>
        <taxon>Embryophyta</taxon>
        <taxon>Tracheophyta</taxon>
        <taxon>Spermatophyta</taxon>
        <taxon>Magnoliopsida</taxon>
        <taxon>Liliopsida</taxon>
        <taxon>Poales</taxon>
        <taxon>Poaceae</taxon>
        <taxon>BOP clade</taxon>
        <taxon>Oryzoideae</taxon>
        <taxon>Oryzeae</taxon>
        <taxon>Oryzinae</taxon>
        <taxon>Oryza</taxon>
        <taxon>Oryza sativa</taxon>
    </lineage>
</organism>
<keyword id="KW-0342">GTP-binding</keyword>
<keyword id="KW-0378">Hydrolase</keyword>
<keyword id="KW-0472">Membrane</keyword>
<keyword id="KW-0496">Mitochondrion</keyword>
<keyword id="KW-0999">Mitochondrion inner membrane</keyword>
<keyword id="KW-0547">Nucleotide-binding</keyword>
<keyword id="KW-0648">Protein biosynthesis</keyword>
<keyword id="KW-1185">Reference proteome</keyword>
<keyword id="KW-0809">Transit peptide</keyword>
<gene>
    <name type="ordered locus">Os06g0144800</name>
    <name type="ordered locus">LOC_Os06g05250</name>
    <name type="ORF">OsJ_20104</name>
    <name type="ORF">OSJNBa0007O20.17</name>
</gene>
<sequence length="663" mass="72843">MAGAAALRRSARRVVLPGAYALSRALQHPERLLSSQASPDRGGVLGSELGLYPPERVRNFSIIAHVDHGKSTLADRLLELTGTIKKGHGQPQYLDKLQVERERGITVKAQTATMFYRHANNQLPASDQPDAPSYLLNLIDTPGHVDFSYEVSRSLAACQGALLVVDAAQGVQAQTIANFYLAFESNLSIIPVINKIDQPTADPDNVKAQLKRLFDIDPSEALLTSAKTGQGLSQVLPAVIERIPSPPGKCDSPVRMLLLDSYYDEYKGVICHVAVVDGALHKGDKIASAATGRTYEVLDVGIMHPELTPTGVLYTGQVGYVISGMRSTKEARIGDTLHQAKSIVEPLPGFKPARHMVFSGLYPADGSDFDALSHAIEKLTCNDASVSVTKETSTALGMGFRCGFLGLLHMDVFHQRLEQEHGAQVISTIPTVPYIFEYGDGSKVQVENPAALASNPGKRIAACWEPTVIATIIIPSEYVGPVIMLCSERRGEQQEYTFIDAQRALLKYRLPLREIIVDFYNELKSITSGYATFDYEDSEYQQSDLVKMDILLNGQPVDAMATIVHNQKAQRVGRELVDKLKKFIERQMFEITIQAAVGSKVIARETLSAMRKNVLAKCYGGDITRKKKLLEKQKEGKKRMKRVGSVDIPQEAFHELLKVSNSK</sequence>
<name>GUF1_ORYSJ</name>
<protein>
    <recommendedName>
        <fullName evidence="1">Translation factor GUF1 homolog, mitochondrial</fullName>
        <ecNumber>3.6.5.-</ecNumber>
    </recommendedName>
    <alternativeName>
        <fullName evidence="1">Elongation factor 4 homolog</fullName>
        <shortName evidence="1">EF-4</shortName>
    </alternativeName>
    <alternativeName>
        <fullName evidence="1">GTPase GUF1 homolog</fullName>
    </alternativeName>
    <alternativeName>
        <fullName evidence="1">Ribosomal back-translocase</fullName>
    </alternativeName>
</protein>
<feature type="transit peptide" description="Mitochondrion" evidence="1">
    <location>
        <begin position="1"/>
        <end position="33"/>
    </location>
</feature>
<feature type="chain" id="PRO_0000402845" description="Translation factor GUF1 homolog, mitochondrial">
    <location>
        <begin position="34"/>
        <end position="663"/>
    </location>
</feature>
<feature type="domain" description="tr-type G">
    <location>
        <begin position="55"/>
        <end position="247"/>
    </location>
</feature>
<feature type="binding site" evidence="1">
    <location>
        <begin position="64"/>
        <end position="71"/>
    </location>
    <ligand>
        <name>GTP</name>
        <dbReference type="ChEBI" id="CHEBI:37565"/>
    </ligand>
</feature>
<feature type="binding site" evidence="1">
    <location>
        <begin position="140"/>
        <end position="144"/>
    </location>
    <ligand>
        <name>GTP</name>
        <dbReference type="ChEBI" id="CHEBI:37565"/>
    </ligand>
</feature>
<feature type="binding site" evidence="1">
    <location>
        <begin position="194"/>
        <end position="197"/>
    </location>
    <ligand>
        <name>GTP</name>
        <dbReference type="ChEBI" id="CHEBI:37565"/>
    </ligand>
</feature>
<comment type="function">
    <text evidence="1">Promotes mitochondrial protein synthesis. May act as a fidelity factor of the translation reaction, by catalyzing a one-codon backward translocation of tRNAs on improperly translocated ribosomes. Binds to mitochondrial ribosomes in a GTP-dependent manner.</text>
</comment>
<comment type="catalytic activity">
    <reaction evidence="1">
        <text>GTP + H2O = GDP + phosphate + H(+)</text>
        <dbReference type="Rhea" id="RHEA:19669"/>
        <dbReference type="ChEBI" id="CHEBI:15377"/>
        <dbReference type="ChEBI" id="CHEBI:15378"/>
        <dbReference type="ChEBI" id="CHEBI:37565"/>
        <dbReference type="ChEBI" id="CHEBI:43474"/>
        <dbReference type="ChEBI" id="CHEBI:58189"/>
    </reaction>
</comment>
<comment type="subcellular location">
    <subcellularLocation>
        <location evidence="1">Mitochondrion inner membrane</location>
        <topology evidence="1">Peripheral membrane protein</topology>
        <orientation evidence="1">Matrix side</orientation>
    </subcellularLocation>
</comment>
<comment type="similarity">
    <text evidence="2">Belongs to the TRAFAC class translation factor GTPase superfamily. Classic translation factor GTPase family. LepA subfamily.</text>
</comment>
<accession>Q5VQ69</accession>
<accession>A0A0P0WSB7</accession>
<evidence type="ECO:0000255" key="1">
    <source>
        <dbReference type="HAMAP-Rule" id="MF_03137"/>
    </source>
</evidence>
<evidence type="ECO:0000305" key="2"/>